<name>VPK9_HUMAN</name>
<protein>
    <recommendedName>
        <fullName>Endogenous retrovirus group K member 9 Pro protein</fullName>
    </recommendedName>
    <alternativeName>
        <fullName>HERV-K(C6) Pro protein</fullName>
    </alternativeName>
    <alternativeName>
        <fullName>HERV-K109 Pro protein</fullName>
    </alternativeName>
    <alternativeName>
        <fullName>HERV-K_6q14.1 provirus ancestral Pro protein</fullName>
        <ecNumber>3.4.23.50</ecNumber>
    </alternativeName>
    <alternativeName>
        <fullName>Protease</fullName>
    </alternativeName>
    <alternativeName>
        <fullName>Proteinase</fullName>
        <shortName>PR</shortName>
    </alternativeName>
</protein>
<gene>
    <name type="primary">ERVK-9</name>
</gene>
<evidence type="ECO:0000250" key="1"/>
<evidence type="ECO:0000255" key="2">
    <source>
        <dbReference type="PROSITE-ProRule" id="PRU00092"/>
    </source>
</evidence>
<evidence type="ECO:0000255" key="3">
    <source>
        <dbReference type="PROSITE-ProRule" id="PRU00275"/>
    </source>
</evidence>
<evidence type="ECO:0000255" key="4">
    <source>
        <dbReference type="PROSITE-ProRule" id="PRU10094"/>
    </source>
</evidence>
<evidence type="ECO:0000305" key="5"/>
<reference key="1">
    <citation type="journal article" date="1999" name="Curr. Biol.">
        <title>Many human endogenous retrovirus K (HERV-K) proviruses are unique to humans.</title>
        <authorList>
            <person name="Barbulescu M."/>
            <person name="Turner G."/>
            <person name="Seaman M.I."/>
            <person name="Deinard A.S."/>
            <person name="Kidd K.K."/>
            <person name="Lenz J."/>
        </authorList>
    </citation>
    <scope>NUCLEOTIDE SEQUENCE [GENOMIC DNA]</scope>
</reference>
<reference key="2">
    <citation type="journal article" date="2003" name="Nature">
        <title>The DNA sequence and analysis of human chromosome 6.</title>
        <authorList>
            <person name="Mungall A.J."/>
            <person name="Palmer S.A."/>
            <person name="Sims S.K."/>
            <person name="Edwards C.A."/>
            <person name="Ashurst J.L."/>
            <person name="Wilming L."/>
            <person name="Jones M.C."/>
            <person name="Horton R."/>
            <person name="Hunt S.E."/>
            <person name="Scott C.E."/>
            <person name="Gilbert J.G.R."/>
            <person name="Clamp M.E."/>
            <person name="Bethel G."/>
            <person name="Milne S."/>
            <person name="Ainscough R."/>
            <person name="Almeida J.P."/>
            <person name="Ambrose K.D."/>
            <person name="Andrews T.D."/>
            <person name="Ashwell R.I.S."/>
            <person name="Babbage A.K."/>
            <person name="Bagguley C.L."/>
            <person name="Bailey J."/>
            <person name="Banerjee R."/>
            <person name="Barker D.J."/>
            <person name="Barlow K.F."/>
            <person name="Bates K."/>
            <person name="Beare D.M."/>
            <person name="Beasley H."/>
            <person name="Beasley O."/>
            <person name="Bird C.P."/>
            <person name="Blakey S.E."/>
            <person name="Bray-Allen S."/>
            <person name="Brook J."/>
            <person name="Brown A.J."/>
            <person name="Brown J.Y."/>
            <person name="Burford D.C."/>
            <person name="Burrill W."/>
            <person name="Burton J."/>
            <person name="Carder C."/>
            <person name="Carter N.P."/>
            <person name="Chapman J.C."/>
            <person name="Clark S.Y."/>
            <person name="Clark G."/>
            <person name="Clee C.M."/>
            <person name="Clegg S."/>
            <person name="Cobley V."/>
            <person name="Collier R.E."/>
            <person name="Collins J.E."/>
            <person name="Colman L.K."/>
            <person name="Corby N.R."/>
            <person name="Coville G.J."/>
            <person name="Culley K.M."/>
            <person name="Dhami P."/>
            <person name="Davies J."/>
            <person name="Dunn M."/>
            <person name="Earthrowl M.E."/>
            <person name="Ellington A.E."/>
            <person name="Evans K.A."/>
            <person name="Faulkner L."/>
            <person name="Francis M.D."/>
            <person name="Frankish A."/>
            <person name="Frankland J."/>
            <person name="French L."/>
            <person name="Garner P."/>
            <person name="Garnett J."/>
            <person name="Ghori M.J."/>
            <person name="Gilby L.M."/>
            <person name="Gillson C.J."/>
            <person name="Glithero R.J."/>
            <person name="Grafham D.V."/>
            <person name="Grant M."/>
            <person name="Gribble S."/>
            <person name="Griffiths C."/>
            <person name="Griffiths M.N.D."/>
            <person name="Hall R."/>
            <person name="Halls K.S."/>
            <person name="Hammond S."/>
            <person name="Harley J.L."/>
            <person name="Hart E.A."/>
            <person name="Heath P.D."/>
            <person name="Heathcott R."/>
            <person name="Holmes S.J."/>
            <person name="Howden P.J."/>
            <person name="Howe K.L."/>
            <person name="Howell G.R."/>
            <person name="Huckle E."/>
            <person name="Humphray S.J."/>
            <person name="Humphries M.D."/>
            <person name="Hunt A.R."/>
            <person name="Johnson C.M."/>
            <person name="Joy A.A."/>
            <person name="Kay M."/>
            <person name="Keenan S.J."/>
            <person name="Kimberley A.M."/>
            <person name="King A."/>
            <person name="Laird G.K."/>
            <person name="Langford C."/>
            <person name="Lawlor S."/>
            <person name="Leongamornlert D.A."/>
            <person name="Leversha M."/>
            <person name="Lloyd C.R."/>
            <person name="Lloyd D.M."/>
            <person name="Loveland J.E."/>
            <person name="Lovell J."/>
            <person name="Martin S."/>
            <person name="Mashreghi-Mohammadi M."/>
            <person name="Maslen G.L."/>
            <person name="Matthews L."/>
            <person name="McCann O.T."/>
            <person name="McLaren S.J."/>
            <person name="McLay K."/>
            <person name="McMurray A."/>
            <person name="Moore M.J.F."/>
            <person name="Mullikin J.C."/>
            <person name="Niblett D."/>
            <person name="Nickerson T."/>
            <person name="Novik K.L."/>
            <person name="Oliver K."/>
            <person name="Overton-Larty E.K."/>
            <person name="Parker A."/>
            <person name="Patel R."/>
            <person name="Pearce A.V."/>
            <person name="Peck A.I."/>
            <person name="Phillimore B.J.C.T."/>
            <person name="Phillips S."/>
            <person name="Plumb R.W."/>
            <person name="Porter K.M."/>
            <person name="Ramsey Y."/>
            <person name="Ranby S.A."/>
            <person name="Rice C.M."/>
            <person name="Ross M.T."/>
            <person name="Searle S.M."/>
            <person name="Sehra H.K."/>
            <person name="Sheridan E."/>
            <person name="Skuce C.D."/>
            <person name="Smith S."/>
            <person name="Smith M."/>
            <person name="Spraggon L."/>
            <person name="Squares S.L."/>
            <person name="Steward C.A."/>
            <person name="Sycamore N."/>
            <person name="Tamlyn-Hall G."/>
            <person name="Tester J."/>
            <person name="Theaker A.J."/>
            <person name="Thomas D.W."/>
            <person name="Thorpe A."/>
            <person name="Tracey A."/>
            <person name="Tromans A."/>
            <person name="Tubby B."/>
            <person name="Wall M."/>
            <person name="Wallis J.M."/>
            <person name="West A.P."/>
            <person name="White S.S."/>
            <person name="Whitehead S.L."/>
            <person name="Whittaker H."/>
            <person name="Wild A."/>
            <person name="Willey D.J."/>
            <person name="Wilmer T.E."/>
            <person name="Wood J.M."/>
            <person name="Wray P.W."/>
            <person name="Wyatt J.C."/>
            <person name="Young L."/>
            <person name="Younger R.M."/>
            <person name="Bentley D.R."/>
            <person name="Coulson A."/>
            <person name="Durbin R.M."/>
            <person name="Hubbard T."/>
            <person name="Sulston J.E."/>
            <person name="Dunham I."/>
            <person name="Rogers J."/>
            <person name="Beck S."/>
        </authorList>
    </citation>
    <scope>NUCLEOTIDE SEQUENCE [LARGE SCALE GENOMIC DNA]</scope>
</reference>
<sequence>WASQVSENRPVCKAIIQGKQFEGLVDTGADVSIIALNQWPKNWPKQKAVTGLVGIGTASEVYQSMEILHCLGPDNQESTVQPMITSIPLNLWGRDLLQQWGAEITMPAPLYSPTSQKIMTKRGYIPGKGLGKNEDGIKIPFEAKINQKREGIGYPF</sequence>
<accession>P63127</accession>
<accession>Q9UKH4</accession>
<comment type="function">
    <text evidence="1">Retroviral proteases have roles in the processing of the primary translation products and the maturation of the viral particle. Endogenous Pro proteins may have kept, lost or modified their original function during evolution (By similarity).</text>
</comment>
<comment type="catalytic activity">
    <reaction>
        <text>Processing at the authentic HIV-1 PR recognition site and release of the mature p17 matrix and the p24 capsid protein, as a result of the cleavage of the -SQNY-|-PIVQ- cleavage site.</text>
        <dbReference type="EC" id="3.4.23.50"/>
    </reaction>
</comment>
<comment type="subunit">
    <text evidence="1">Active as a homodimer.</text>
</comment>
<comment type="alternative products">
    <event type="ribosomal frameshifting"/>
    <isoform>
        <id>P63127-1</id>
        <name>1</name>
        <sequence type="displayed"/>
    </isoform>
    <text>This protein is synthesized as Gag-Pro and Gag-Pro-Pol polyprotein. These polyproteins are thought, by similarity with type-B retroviruses, to be generated by -1 frameshifts occurring at the Gag-Pro and Pro-Pol genes boundaries.</text>
</comment>
<comment type="PTM">
    <text evidence="1">Autoproteolytically processed at the N-terminus. Expected C-terminal autoprocessing not detected. The sequence shown is that of the processed Pro protein (By similarity).</text>
</comment>
<comment type="similarity">
    <text evidence="5">Belongs to the peptidase A2 family. HERV class-II K(HML-2) subfamily.</text>
</comment>
<proteinExistence type="inferred from homology"/>
<feature type="chain" id="PRO_0000199539" description="Endogenous retrovirus group K member 9 Pro protein">
    <location>
        <begin position="1"/>
        <end position="156"/>
    </location>
</feature>
<feature type="domain" description="Peptidase A2" evidence="3">
    <location>
        <begin position="21"/>
        <end position="96"/>
    </location>
</feature>
<feature type="domain" description="G-patch" evidence="2">
    <location>
        <begin position="111"/>
        <end position="156"/>
    </location>
</feature>
<feature type="active site" evidence="4">
    <location>
        <position position="26"/>
    </location>
</feature>
<organism>
    <name type="scientific">Homo sapiens</name>
    <name type="common">Human</name>
    <dbReference type="NCBI Taxonomy" id="9606"/>
    <lineage>
        <taxon>Eukaryota</taxon>
        <taxon>Metazoa</taxon>
        <taxon>Chordata</taxon>
        <taxon>Craniata</taxon>
        <taxon>Vertebrata</taxon>
        <taxon>Euteleostomi</taxon>
        <taxon>Mammalia</taxon>
        <taxon>Eutheria</taxon>
        <taxon>Euarchontoglires</taxon>
        <taxon>Primates</taxon>
        <taxon>Haplorrhini</taxon>
        <taxon>Catarrhini</taxon>
        <taxon>Hominidae</taxon>
        <taxon>Homo</taxon>
    </lineage>
</organism>
<keyword id="KW-0064">Aspartyl protease</keyword>
<keyword id="KW-0068">Autocatalytic cleavage</keyword>
<keyword id="KW-0895">ERV</keyword>
<keyword id="KW-0378">Hydrolase</keyword>
<keyword id="KW-0645">Protease</keyword>
<keyword id="KW-1185">Reference proteome</keyword>
<keyword id="KW-0688">Ribosomal frameshifting</keyword>
<keyword id="KW-0814">Transposable element</keyword>
<dbReference type="EC" id="3.4.23.50"/>
<dbReference type="EMBL" id="AF164615">
    <property type="protein sequence ID" value="AAD51799.1"/>
    <property type="status" value="ALT_SEQ"/>
    <property type="molecule type" value="Genomic_DNA"/>
</dbReference>
<dbReference type="EMBL" id="AL590785">
    <property type="status" value="NOT_ANNOTATED_CDS"/>
    <property type="molecule type" value="Genomic_DNA"/>
</dbReference>
<dbReference type="SMR" id="P63127"/>
<dbReference type="MEROPS" id="A02.011"/>
<dbReference type="iPTMnet" id="P63127"/>
<dbReference type="PhosphoSitePlus" id="P63127"/>
<dbReference type="BioMuta" id="HGNC:39005"/>
<dbReference type="DMDM" id="52000857"/>
<dbReference type="PeptideAtlas" id="P63127"/>
<dbReference type="GeneCards" id="ERVK-9"/>
<dbReference type="HGNC" id="HGNC:39005">
    <property type="gene designation" value="ERVK-9"/>
</dbReference>
<dbReference type="neXtProt" id="NX_P63127"/>
<dbReference type="PhylomeDB" id="P63127"/>
<dbReference type="Pharos" id="P63127">
    <property type="development level" value="Tdark"/>
</dbReference>
<dbReference type="Proteomes" id="UP000005640">
    <property type="component" value="Unplaced"/>
</dbReference>
<dbReference type="GO" id="GO:0004190">
    <property type="term" value="F:aspartic-type endopeptidase activity"/>
    <property type="evidence" value="ECO:0007669"/>
    <property type="project" value="UniProtKB-KW"/>
</dbReference>
<dbReference type="GO" id="GO:0003676">
    <property type="term" value="F:nucleic acid binding"/>
    <property type="evidence" value="ECO:0007669"/>
    <property type="project" value="InterPro"/>
</dbReference>
<dbReference type="GO" id="GO:0006508">
    <property type="term" value="P:proteolysis"/>
    <property type="evidence" value="ECO:0007669"/>
    <property type="project" value="UniProtKB-KW"/>
</dbReference>
<dbReference type="GO" id="GO:0075523">
    <property type="term" value="P:viral translational frameshifting"/>
    <property type="evidence" value="ECO:0007669"/>
    <property type="project" value="UniProtKB-KW"/>
</dbReference>
<dbReference type="CDD" id="cd05482">
    <property type="entry name" value="HIV_retropepsin_like"/>
    <property type="match status" value="1"/>
</dbReference>
<dbReference type="Gene3D" id="2.40.70.10">
    <property type="entry name" value="Acid Proteases"/>
    <property type="match status" value="1"/>
</dbReference>
<dbReference type="InterPro" id="IPR001969">
    <property type="entry name" value="Aspartic_peptidase_AS"/>
</dbReference>
<dbReference type="InterPro" id="IPR000467">
    <property type="entry name" value="G_patch_dom"/>
</dbReference>
<dbReference type="InterPro" id="IPR051592">
    <property type="entry name" value="HERV-K_Pro_peptidase_A2"/>
</dbReference>
<dbReference type="InterPro" id="IPR001995">
    <property type="entry name" value="Peptidase_A2_cat"/>
</dbReference>
<dbReference type="InterPro" id="IPR021109">
    <property type="entry name" value="Peptidase_aspartic_dom_sf"/>
</dbReference>
<dbReference type="InterPro" id="IPR034170">
    <property type="entry name" value="Retropepsin-like_cat_dom"/>
</dbReference>
<dbReference type="InterPro" id="IPR018061">
    <property type="entry name" value="Retropepsins"/>
</dbReference>
<dbReference type="PANTHER" id="PTHR19422">
    <property type="entry name" value="GAG RETROVIRAL POLYPROTEIN"/>
    <property type="match status" value="1"/>
</dbReference>
<dbReference type="PANTHER" id="PTHR19422:SF123">
    <property type="entry name" value="RT1 CLASS I, LOCUS CE15"/>
    <property type="match status" value="1"/>
</dbReference>
<dbReference type="Pfam" id="PF01585">
    <property type="entry name" value="G-patch"/>
    <property type="match status" value="1"/>
</dbReference>
<dbReference type="Pfam" id="PF00077">
    <property type="entry name" value="RVP"/>
    <property type="match status" value="1"/>
</dbReference>
<dbReference type="SMART" id="SM00443">
    <property type="entry name" value="G_patch"/>
    <property type="match status" value="1"/>
</dbReference>
<dbReference type="SUPFAM" id="SSF50630">
    <property type="entry name" value="Acid proteases"/>
    <property type="match status" value="1"/>
</dbReference>
<dbReference type="PROSITE" id="PS50175">
    <property type="entry name" value="ASP_PROT_RETROV"/>
    <property type="match status" value="1"/>
</dbReference>
<dbReference type="PROSITE" id="PS00141">
    <property type="entry name" value="ASP_PROTEASE"/>
    <property type="match status" value="1"/>
</dbReference>
<dbReference type="PROSITE" id="PS50174">
    <property type="entry name" value="G_PATCH"/>
    <property type="match status" value="1"/>
</dbReference>